<name>ORC4_ARATH</name>
<reference key="1">
    <citation type="journal article" date="2004" name="FEBS Lett.">
        <title>Genome based identification and analysis of the pre-replicative complex of Arabidopsis thaliana.</title>
        <authorList>
            <person name="Masuda H.P."/>
            <person name="Ramos G.B.A."/>
            <person name="de Almeida-Engler J."/>
            <person name="Cabral L.M."/>
            <person name="Coqueiro V.M."/>
            <person name="Macrini C.M.T."/>
            <person name="Ferreira P.C.G."/>
            <person name="Hemerly A.S."/>
        </authorList>
    </citation>
    <scope>NUCLEOTIDE SEQUENCE [MRNA] (ISOFORM 2)</scope>
    <scope>SUBUNIT</scope>
    <scope>INTERACTION WITH ORC2 AND ORC3</scope>
    <scope>TISSUE SPECIFICITY</scope>
    <scope>INDUCTION BY SUCROSE</scope>
    <scope>GENE FAMILY</scope>
</reference>
<reference key="2">
    <citation type="journal article" date="2004" name="Plant Cell">
        <title>Genetic interaction of an origin recognition complex subunit and the Polycomb group gene MEDEA during seed development.</title>
        <authorList>
            <person name="Collinge M.A."/>
            <person name="Spillane C."/>
            <person name="Kohler C."/>
            <person name="Gheyselinck J."/>
            <person name="Grossniklaus U."/>
        </authorList>
    </citation>
    <scope>NUCLEOTIDE SEQUENCE [MRNA] (ISOFORM 1)</scope>
    <source>
        <strain>cv. Landsberg erecta</strain>
        <tissue>Flower</tissue>
    </source>
</reference>
<reference key="3">
    <citation type="submission" date="2003-07" db="EMBL/GenBank/DDBJ databases">
        <title>Organization of Arabidopsis origin recognition complex genes.</title>
        <authorList>
            <person name="Diaz-Trivino S."/>
            <person name="Castellano M.M."/>
            <person name="Gutierrez C."/>
        </authorList>
    </citation>
    <scope>NUCLEOTIDE SEQUENCE [MRNA] (ISOFORM 1)</scope>
</reference>
<reference key="4">
    <citation type="journal article" date="1999" name="Nature">
        <title>Sequence and analysis of chromosome 2 of the plant Arabidopsis thaliana.</title>
        <authorList>
            <person name="Lin X."/>
            <person name="Kaul S."/>
            <person name="Rounsley S.D."/>
            <person name="Shea T.P."/>
            <person name="Benito M.-I."/>
            <person name="Town C.D."/>
            <person name="Fujii C.Y."/>
            <person name="Mason T.M."/>
            <person name="Bowman C.L."/>
            <person name="Barnstead M.E."/>
            <person name="Feldblyum T.V."/>
            <person name="Buell C.R."/>
            <person name="Ketchum K.A."/>
            <person name="Lee J.J."/>
            <person name="Ronning C.M."/>
            <person name="Koo H.L."/>
            <person name="Moffat K.S."/>
            <person name="Cronin L.A."/>
            <person name="Shen M."/>
            <person name="Pai G."/>
            <person name="Van Aken S."/>
            <person name="Umayam L."/>
            <person name="Tallon L.J."/>
            <person name="Gill J.E."/>
            <person name="Adams M.D."/>
            <person name="Carrera A.J."/>
            <person name="Creasy T.H."/>
            <person name="Goodman H.M."/>
            <person name="Somerville C.R."/>
            <person name="Copenhaver G.P."/>
            <person name="Preuss D."/>
            <person name="Nierman W.C."/>
            <person name="White O."/>
            <person name="Eisen J.A."/>
            <person name="Salzberg S.L."/>
            <person name="Fraser C.M."/>
            <person name="Venter J.C."/>
        </authorList>
    </citation>
    <scope>NUCLEOTIDE SEQUENCE [LARGE SCALE GENOMIC DNA]</scope>
    <source>
        <strain>cv. Columbia</strain>
    </source>
</reference>
<reference key="5">
    <citation type="journal article" date="2017" name="Plant J.">
        <title>Araport11: a complete reannotation of the Arabidopsis thaliana reference genome.</title>
        <authorList>
            <person name="Cheng C.Y."/>
            <person name="Krishnakumar V."/>
            <person name="Chan A.P."/>
            <person name="Thibaud-Nissen F."/>
            <person name="Schobel S."/>
            <person name="Town C.D."/>
        </authorList>
    </citation>
    <scope>GENOME REANNOTATION</scope>
    <scope>SEQUENCE REVISION</scope>
    <source>
        <strain>cv. Columbia</strain>
    </source>
</reference>
<reference key="6">
    <citation type="submission" date="2004-01" db="EMBL/GenBank/DDBJ databases">
        <title>Arabidopsis ORF clones.</title>
        <authorList>
            <person name="Cheuk R.F."/>
            <person name="Chen H."/>
            <person name="Kim C.J."/>
            <person name="Shinn P."/>
            <person name="Ecker J.R."/>
        </authorList>
    </citation>
    <scope>NUCLEOTIDE SEQUENCE [LARGE SCALE MRNA] OF 285-417 (ISOFORM 1)</scope>
</reference>
<reference key="7">
    <citation type="journal article" date="2005" name="Nucleic Acids Res.">
        <title>The genes encoding Arabidopsis ORC subunits are E2F targets and the two ORC1 genes are differently expressed in proliferating and endoreplicating cells.</title>
        <authorList>
            <person name="Diaz-Trivino S."/>
            <person name="Castellano M.M."/>
            <person name="Sanchez M.P."/>
            <person name="Ramirez-Parra E."/>
            <person name="Desvoyes B."/>
            <person name="Gutierrez C."/>
        </authorList>
    </citation>
    <scope>SUBUNIT</scope>
    <scope>INTERACTION WITH ORC1A; ORC2; ORC3; ORC5 AND ORC6</scope>
    <scope>TISSUE SPECIFICITY</scope>
    <scope>INDUCTION BY E2F AND SUCROSE</scope>
    <scope>GENE FAMILY</scope>
    <scope>NOMENCLATURE</scope>
</reference>
<reference key="8">
    <citation type="journal article" date="2007" name="Plant Physiol.">
        <title>Genome-wide analysis of the core DNA replication machinery in the higher plants Arabidopsis and rice.</title>
        <authorList>
            <person name="Shultz R.W."/>
            <person name="Tatineni V.M."/>
            <person name="Hanley-Bowdoin L."/>
            <person name="Thompson W.F."/>
        </authorList>
    </citation>
    <scope>REVIEW ON THE CORE DNA REPLICATION MACHINERY</scope>
</reference>
<sequence length="417" mass="47032">MGKETPAEKSLNLIRGRLCDPSYVFRPLSASSDSNYSKLKFIVSTSITEGCNNSMLLLGPRGSGKAAVLDLGVGDLLEQFPDSVSVIRLNGLLHSDDNCAFKEIAKQLCMEHHLLFSKMASFDDNSQFIIAMLRACGLAHKTIIFVLDEFDMFAQGKQRLLYSLLDAMQSVTSQAVVVGISSRLDADQLLEKRVRSRFSHRKFLFLPPSREELDGLFVHLLSLPADSGFPSGYVSRFNDKIKNLTSDTRFKDILKTLFNANSTVNSFLKFIFCAVSLMNLESGLLSLENFKAALSSMQRQPKLEAVRDCSVLELYLLVCMRRLEVKEQSSYNFISVMKEYKAIHDSFHTSDYYAQNVCLRAFEHLRERQVICYAENRGQSQTGEYRLQKLLISASELHQGMRSHACCPAILLKLLDH</sequence>
<protein>
    <recommendedName>
        <fullName evidence="6">Origin of replication complex subunit 4</fullName>
        <shortName evidence="6">AtORC4</shortName>
    </recommendedName>
</protein>
<evidence type="ECO:0000250" key="1">
    <source>
        <dbReference type="UniProtKB" id="O43929"/>
    </source>
</evidence>
<evidence type="ECO:0000255" key="2"/>
<evidence type="ECO:0000269" key="3">
    <source>
    </source>
</evidence>
<evidence type="ECO:0000269" key="4">
    <source>
    </source>
</evidence>
<evidence type="ECO:0000303" key="5">
    <source>
    </source>
</evidence>
<evidence type="ECO:0000303" key="6">
    <source>
    </source>
</evidence>
<evidence type="ECO:0000305" key="7"/>
<evidence type="ECO:0000312" key="8">
    <source>
        <dbReference type="Araport" id="AT2G01120"/>
    </source>
</evidence>
<evidence type="ECO:0000312" key="9">
    <source>
        <dbReference type="EMBL" id="AAF18660.1"/>
    </source>
</evidence>
<evidence type="ECO:0000312" key="10">
    <source>
        <dbReference type="EMBL" id="CAE01428.1"/>
    </source>
</evidence>
<keyword id="KW-0025">Alternative splicing</keyword>
<keyword id="KW-0067">ATP-binding</keyword>
<keyword id="KW-0235">DNA replication</keyword>
<keyword id="KW-0238">DNA-binding</keyword>
<keyword id="KW-0547">Nucleotide-binding</keyword>
<keyword id="KW-0539">Nucleus</keyword>
<keyword id="KW-1185">Reference proteome</keyword>
<accession>Q6EWX1</accession>
<accession>F4IM83</accession>
<accession>Q6E7G9</accession>
<accession>Q70BT4</accession>
<accession>Q9SJV4</accession>
<feature type="chain" id="PRO_0000431433" description="Origin of replication complex subunit 4">
    <location>
        <begin position="1"/>
        <end position="417"/>
    </location>
</feature>
<feature type="binding site" evidence="2">
    <location>
        <begin position="59"/>
        <end position="66"/>
    </location>
    <ligand>
        <name>ATP</name>
        <dbReference type="ChEBI" id="CHEBI:30616"/>
    </ligand>
</feature>
<feature type="splice variant" id="VSP_057259" description="In isoform 2.">
    <location>
        <begin position="303"/>
        <end position="322"/>
    </location>
</feature>
<feature type="splice variant" id="VSP_057260" description="In isoform 2.">
    <location>
        <begin position="361"/>
        <end position="374"/>
    </location>
</feature>
<feature type="sequence conflict" description="In Ref. 2; CAE52912 and 1; AAT37464." evidence="7" ref="2 1">
    <original>G</original>
    <variation>V</variation>
    <location>
        <position position="72"/>
    </location>
</feature>
<feature type="sequence conflict" description="In Ref. 4; AAF18660." evidence="7" ref="4">
    <original>V</original>
    <variation>L</variation>
    <location>
        <position position="73"/>
    </location>
</feature>
<feature type="sequence conflict" description="In Ref. 2; CAE52912." evidence="7" ref="2">
    <original>K</original>
    <variation>R</variation>
    <location>
        <position position="106"/>
    </location>
</feature>
<feature type="sequence conflict" description="In Ref. 1; AAT37464." evidence="7" ref="1">
    <original>QRL</original>
    <variation>AAV</variation>
    <location>
        <begin position="158"/>
        <end position="160"/>
    </location>
</feature>
<feature type="sequence conflict" description="In Ref. 4; AAF18660 and 5; AEC05403." evidence="7" ref="4 5">
    <original>L</original>
    <variation>LD</variation>
    <location>
        <position position="165"/>
    </location>
</feature>
<feature type="sequence conflict" description="In Ref. 2; CAE52912." evidence="7" ref="2">
    <original>S</original>
    <variation>T</variation>
    <location>
        <position position="262"/>
    </location>
</feature>
<comment type="function">
    <text evidence="1">Component of the origin recognition complex (ORC) that binds origins of replication. DNA-binding is ATP-dependent. The specific DNA sequences that define origins of replication have not been identified yet. ORC is required to assemble the pre-replication complex necessary to initiate DNA replication.</text>
</comment>
<comment type="subunit">
    <text evidence="3 4">Component of the origin recognition complex (ORC) composed of at least ORC1 (ORC1A or ORC1B), ORC2, ORC3, ORC4, ORC5 and ORC6. ORC is regulated in a cell-cycle and development dependent manner. It is sequentially assembled at the exit from anaphase of mitosis and disassembled as cells enter S phase. Interacts directly with ORC1A, ORC2, ORC3, ORC5 and ORC6.</text>
</comment>
<comment type="interaction">
    <interactant intactId="EBI-2114176">
        <id>Q6EWX1</id>
    </interactant>
    <interactant intactId="EBI-2114089">
        <id>Q38899</id>
        <label>ORC2</label>
    </interactant>
    <organismsDiffer>false</organismsDiffer>
    <experiments>2</experiments>
</comment>
<comment type="interaction">
    <interactant intactId="EBI-2114176">
        <id>Q6EWX1</id>
    </interactant>
    <interactant intactId="EBI-2114109">
        <id>Q6EWX0</id>
        <label>ORC5</label>
    </interactant>
    <organismsDiffer>false</organismsDiffer>
    <experiments>2</experiments>
</comment>
<comment type="interaction">
    <interactant intactId="EBI-2114176">
        <id>Q6EWX1</id>
    </interactant>
    <interactant intactId="EBI-2114077">
        <id>Q9ZVH3</id>
        <label>ORC6</label>
    </interactant>
    <organismsDiffer>false</organismsDiffer>
    <experiments>2</experiments>
</comment>
<comment type="subcellular location">
    <subcellularLocation>
        <location evidence="1">Nucleus</location>
    </subcellularLocation>
</comment>
<comment type="alternative products">
    <event type="alternative splicing"/>
    <isoform>
        <id>Q6EWX1-1</id>
        <name>1</name>
        <name evidence="5">AtORC4a</name>
        <sequence type="displayed"/>
    </isoform>
    <isoform>
        <id>Q6EWX1-2</id>
        <name>2</name>
        <name evidence="5">AtORC4b</name>
        <sequence type="described" ref="VSP_057259 VSP_057260"/>
    </isoform>
    <text evidence="7">Additional isoforms seem to exist.</text>
</comment>
<comment type="tissue specificity">
    <text evidence="3 4">Follow a cell-cycle regulation with a peak at the G1/S-phase (PubMed:16179646). Isoform AtORC4a is expressed at low levels ubiquitously (PubMed:15358564). Isoform AtORC4b is mostly expressed in siliques, flowers and flower buds, and, to a lower exent, in roots, leaves and stems (PubMed:15358564, PubMed:16179646).</text>
</comment>
<comment type="induction">
    <text evidence="3 4">Regulated by E2F (PubMed:16179646). Accumulates rapidly after cell cycle reactivation by sucrose addition following cell cycle arrest mediated by sucrose deprivation (PubMed:15358564, PubMed:16179646).</text>
</comment>
<comment type="similarity">
    <text evidence="7">Belongs to the ORC4 family.</text>
</comment>
<comment type="sequence caution" evidence="7">
    <conflict type="erroneous gene model prediction">
        <sequence resource="EMBL-CDS" id="AAF18660"/>
    </conflict>
</comment>
<comment type="sequence caution" evidence="7">
    <conflict type="frameshift">
        <sequence resource="EMBL-CDS" id="AAF18660"/>
    </conflict>
</comment>
<comment type="sequence caution" evidence="7">
    <conflict type="erroneous initiation">
        <sequence resource="EMBL-CDS" id="AAR92242"/>
    </conflict>
    <text>Truncated N-terminus.</text>
</comment>
<comment type="sequence caution" evidence="7">
    <conflict type="frameshift">
        <sequence resource="EMBL-CDS" id="CAE52912"/>
    </conflict>
</comment>
<dbReference type="EMBL" id="AY524003">
    <property type="protein sequence ID" value="AAT37464.2"/>
    <property type="molecule type" value="mRNA"/>
</dbReference>
<dbReference type="EMBL" id="AJ586913">
    <property type="protein sequence ID" value="CAE52912.1"/>
    <property type="status" value="ALT_FRAME"/>
    <property type="molecule type" value="mRNA"/>
</dbReference>
<dbReference type="EMBL" id="AJ575582">
    <property type="protein sequence ID" value="CAE01428.1"/>
    <property type="molecule type" value="mRNA"/>
</dbReference>
<dbReference type="EMBL" id="AC006837">
    <property type="protein sequence ID" value="AAF18660.1"/>
    <property type="status" value="ALT_SEQ"/>
    <property type="molecule type" value="Genomic_DNA"/>
</dbReference>
<dbReference type="EMBL" id="CP002685">
    <property type="protein sequence ID" value="AEC05403.1"/>
    <property type="molecule type" value="Genomic_DNA"/>
</dbReference>
<dbReference type="EMBL" id="BT011206">
    <property type="protein sequence ID" value="AAR92242.1"/>
    <property type="status" value="ALT_INIT"/>
    <property type="molecule type" value="mRNA"/>
</dbReference>
<dbReference type="EMBL" id="BT011662">
    <property type="protein sequence ID" value="AAS47668.1"/>
    <property type="molecule type" value="mRNA"/>
</dbReference>
<dbReference type="PIR" id="H84420">
    <property type="entry name" value="H84420"/>
</dbReference>
<dbReference type="RefSeq" id="NP_178222.4">
    <property type="nucleotide sequence ID" value="NM_126174.5"/>
</dbReference>
<dbReference type="SMR" id="Q6EWX1"/>
<dbReference type="FunCoup" id="Q6EWX1">
    <property type="interactions" value="3270"/>
</dbReference>
<dbReference type="IntAct" id="Q6EWX1">
    <property type="interactions" value="5"/>
</dbReference>
<dbReference type="STRING" id="3702.Q6EWX1"/>
<dbReference type="PaxDb" id="3702-AT2G01120.2"/>
<dbReference type="ProteomicsDB" id="248766">
    <molecule id="Q6EWX1-1"/>
</dbReference>
<dbReference type="DNASU" id="814641"/>
<dbReference type="GeneID" id="814641"/>
<dbReference type="KEGG" id="ath:AT2G01120"/>
<dbReference type="Araport" id="AT2G01120"/>
<dbReference type="TAIR" id="AT2G01120">
    <property type="gene designation" value="ORC4"/>
</dbReference>
<dbReference type="eggNOG" id="KOG2228">
    <property type="taxonomic scope" value="Eukaryota"/>
</dbReference>
<dbReference type="InParanoid" id="Q6EWX1"/>
<dbReference type="PhylomeDB" id="Q6EWX1"/>
<dbReference type="PRO" id="PR:Q6EWX1"/>
<dbReference type="Proteomes" id="UP000006548">
    <property type="component" value="Chromosome 2"/>
</dbReference>
<dbReference type="ExpressionAtlas" id="Q6EWX1">
    <property type="expression patterns" value="baseline and differential"/>
</dbReference>
<dbReference type="GO" id="GO:0005664">
    <property type="term" value="C:nuclear origin of replication recognition complex"/>
    <property type="evidence" value="ECO:0000318"/>
    <property type="project" value="GO_Central"/>
</dbReference>
<dbReference type="GO" id="GO:0005524">
    <property type="term" value="F:ATP binding"/>
    <property type="evidence" value="ECO:0007669"/>
    <property type="project" value="UniProtKB-KW"/>
</dbReference>
<dbReference type="GO" id="GO:0016887">
    <property type="term" value="F:ATP hydrolysis activity"/>
    <property type="evidence" value="ECO:0007669"/>
    <property type="project" value="InterPro"/>
</dbReference>
<dbReference type="GO" id="GO:0003688">
    <property type="term" value="F:DNA replication origin binding"/>
    <property type="evidence" value="ECO:0000318"/>
    <property type="project" value="GO_Central"/>
</dbReference>
<dbReference type="GO" id="GO:0006270">
    <property type="term" value="P:DNA replication initiation"/>
    <property type="evidence" value="ECO:0000318"/>
    <property type="project" value="GO_Central"/>
</dbReference>
<dbReference type="FunFam" id="3.40.50.300:FF:001041">
    <property type="entry name" value="Origin of replication complex subunit 4"/>
    <property type="match status" value="1"/>
</dbReference>
<dbReference type="Gene3D" id="3.40.50.300">
    <property type="entry name" value="P-loop containing nucleotide triphosphate hydrolases"/>
    <property type="match status" value="1"/>
</dbReference>
<dbReference type="InterPro" id="IPR003959">
    <property type="entry name" value="ATPase_AAA_core"/>
</dbReference>
<dbReference type="InterPro" id="IPR016527">
    <property type="entry name" value="ORC4"/>
</dbReference>
<dbReference type="InterPro" id="IPR032705">
    <property type="entry name" value="ORC4_C"/>
</dbReference>
<dbReference type="InterPro" id="IPR027417">
    <property type="entry name" value="P-loop_NTPase"/>
</dbReference>
<dbReference type="PANTHER" id="PTHR12087">
    <property type="entry name" value="ORIGIN RECOGNITION COMPLEX SUBUNIT 4"/>
    <property type="match status" value="1"/>
</dbReference>
<dbReference type="PANTHER" id="PTHR12087:SF0">
    <property type="entry name" value="ORIGIN RECOGNITION COMPLEX SUBUNIT 4"/>
    <property type="match status" value="1"/>
</dbReference>
<dbReference type="Pfam" id="PF00004">
    <property type="entry name" value="AAA"/>
    <property type="match status" value="1"/>
</dbReference>
<dbReference type="Pfam" id="PF14629">
    <property type="entry name" value="ORC4_C"/>
    <property type="match status" value="1"/>
</dbReference>
<dbReference type="PIRSF" id="PIRSF007858">
    <property type="entry name" value="ORC4"/>
    <property type="match status" value="1"/>
</dbReference>
<dbReference type="SUPFAM" id="SSF52540">
    <property type="entry name" value="P-loop containing nucleoside triphosphate hydrolases"/>
    <property type="match status" value="1"/>
</dbReference>
<proteinExistence type="evidence at protein level"/>
<organism evidence="10">
    <name type="scientific">Arabidopsis thaliana</name>
    <name type="common">Mouse-ear cress</name>
    <dbReference type="NCBI Taxonomy" id="3702"/>
    <lineage>
        <taxon>Eukaryota</taxon>
        <taxon>Viridiplantae</taxon>
        <taxon>Streptophyta</taxon>
        <taxon>Embryophyta</taxon>
        <taxon>Tracheophyta</taxon>
        <taxon>Spermatophyta</taxon>
        <taxon>Magnoliopsida</taxon>
        <taxon>eudicotyledons</taxon>
        <taxon>Gunneridae</taxon>
        <taxon>Pentapetalae</taxon>
        <taxon>rosids</taxon>
        <taxon>malvids</taxon>
        <taxon>Brassicales</taxon>
        <taxon>Brassicaceae</taxon>
        <taxon>Camelineae</taxon>
        <taxon>Arabidopsis</taxon>
    </lineage>
</organism>
<gene>
    <name evidence="6" type="primary">ORC4</name>
    <name evidence="8" type="ordered locus">At2g01120</name>
    <name evidence="9" type="ORF">F23H14.9</name>
</gene>